<name>RBL_EUGLO</name>
<proteinExistence type="inferred from homology"/>
<dbReference type="EC" id="4.1.1.39"/>
<dbReference type="EMBL" id="AJ294725">
    <property type="protein sequence ID" value="CAC24574.1"/>
    <property type="molecule type" value="Genomic_DNA"/>
</dbReference>
<dbReference type="PIR" id="S11855">
    <property type="entry name" value="RKITL"/>
</dbReference>
<dbReference type="RefSeq" id="NP_074963.1">
    <property type="nucleotide sequence ID" value="NC_002652.1"/>
</dbReference>
<dbReference type="SMR" id="P26490"/>
<dbReference type="GeneID" id="802514"/>
<dbReference type="GO" id="GO:0009536">
    <property type="term" value="C:plastid"/>
    <property type="evidence" value="ECO:0007669"/>
    <property type="project" value="UniProtKB-SubCell"/>
</dbReference>
<dbReference type="GO" id="GO:0000287">
    <property type="term" value="F:magnesium ion binding"/>
    <property type="evidence" value="ECO:0007669"/>
    <property type="project" value="UniProtKB-UniRule"/>
</dbReference>
<dbReference type="GO" id="GO:0004497">
    <property type="term" value="F:monooxygenase activity"/>
    <property type="evidence" value="ECO:0007669"/>
    <property type="project" value="UniProtKB-KW"/>
</dbReference>
<dbReference type="GO" id="GO:0016984">
    <property type="term" value="F:ribulose-bisphosphate carboxylase activity"/>
    <property type="evidence" value="ECO:0007669"/>
    <property type="project" value="UniProtKB-UniRule"/>
</dbReference>
<dbReference type="GO" id="GO:0015977">
    <property type="term" value="P:carbon fixation"/>
    <property type="evidence" value="ECO:0007669"/>
    <property type="project" value="UniProtKB-UniRule"/>
</dbReference>
<dbReference type="GO" id="GO:0009853">
    <property type="term" value="P:photorespiration"/>
    <property type="evidence" value="ECO:0007669"/>
    <property type="project" value="UniProtKB-KW"/>
</dbReference>
<dbReference type="CDD" id="cd08212">
    <property type="entry name" value="RuBisCO_large_I"/>
    <property type="match status" value="1"/>
</dbReference>
<dbReference type="Gene3D" id="3.20.20.110">
    <property type="entry name" value="Ribulose bisphosphate carboxylase, large subunit, C-terminal domain"/>
    <property type="match status" value="1"/>
</dbReference>
<dbReference type="Gene3D" id="3.30.70.150">
    <property type="entry name" value="RuBisCO large subunit, N-terminal domain"/>
    <property type="match status" value="1"/>
</dbReference>
<dbReference type="HAMAP" id="MF_01338">
    <property type="entry name" value="RuBisCO_L_type1"/>
    <property type="match status" value="1"/>
</dbReference>
<dbReference type="InterPro" id="IPR033966">
    <property type="entry name" value="RuBisCO"/>
</dbReference>
<dbReference type="InterPro" id="IPR020878">
    <property type="entry name" value="RuBisCo_large_chain_AS"/>
</dbReference>
<dbReference type="InterPro" id="IPR000685">
    <property type="entry name" value="RuBisCO_lsu_C"/>
</dbReference>
<dbReference type="InterPro" id="IPR036376">
    <property type="entry name" value="RuBisCO_lsu_C_sf"/>
</dbReference>
<dbReference type="InterPro" id="IPR017443">
    <property type="entry name" value="RuBisCO_lsu_fd_N"/>
</dbReference>
<dbReference type="InterPro" id="IPR036422">
    <property type="entry name" value="RuBisCO_lsu_N_sf"/>
</dbReference>
<dbReference type="InterPro" id="IPR020888">
    <property type="entry name" value="RuBisCO_lsuI"/>
</dbReference>
<dbReference type="NCBIfam" id="NF003252">
    <property type="entry name" value="PRK04208.1"/>
    <property type="match status" value="1"/>
</dbReference>
<dbReference type="PANTHER" id="PTHR42704">
    <property type="entry name" value="RIBULOSE BISPHOSPHATE CARBOXYLASE"/>
    <property type="match status" value="1"/>
</dbReference>
<dbReference type="PANTHER" id="PTHR42704:SF17">
    <property type="entry name" value="RIBULOSE BISPHOSPHATE CARBOXYLASE LARGE CHAIN"/>
    <property type="match status" value="1"/>
</dbReference>
<dbReference type="Pfam" id="PF00016">
    <property type="entry name" value="RuBisCO_large"/>
    <property type="match status" value="1"/>
</dbReference>
<dbReference type="Pfam" id="PF02788">
    <property type="entry name" value="RuBisCO_large_N"/>
    <property type="match status" value="1"/>
</dbReference>
<dbReference type="SFLD" id="SFLDG01052">
    <property type="entry name" value="RuBisCO"/>
    <property type="match status" value="1"/>
</dbReference>
<dbReference type="SFLD" id="SFLDS00014">
    <property type="entry name" value="RuBisCO"/>
    <property type="match status" value="1"/>
</dbReference>
<dbReference type="SFLD" id="SFLDG00301">
    <property type="entry name" value="RuBisCO-like_proteins"/>
    <property type="match status" value="1"/>
</dbReference>
<dbReference type="SUPFAM" id="SSF51649">
    <property type="entry name" value="RuBisCo, C-terminal domain"/>
    <property type="match status" value="1"/>
</dbReference>
<dbReference type="SUPFAM" id="SSF54966">
    <property type="entry name" value="RuBisCO, large subunit, small (N-terminal) domain"/>
    <property type="match status" value="1"/>
</dbReference>
<dbReference type="PROSITE" id="PS00157">
    <property type="entry name" value="RUBISCO_LARGE"/>
    <property type="match status" value="1"/>
</dbReference>
<keyword id="KW-0113">Calvin cycle</keyword>
<keyword id="KW-0120">Carbon dioxide fixation</keyword>
<keyword id="KW-1015">Disulfide bond</keyword>
<keyword id="KW-0456">Lyase</keyword>
<keyword id="KW-0460">Magnesium</keyword>
<keyword id="KW-0479">Metal-binding</keyword>
<keyword id="KW-0488">Methylation</keyword>
<keyword id="KW-0503">Monooxygenase</keyword>
<keyword id="KW-0560">Oxidoreductase</keyword>
<keyword id="KW-0601">Photorespiration</keyword>
<keyword id="KW-0934">Plastid</keyword>
<evidence type="ECO:0000250" key="1"/>
<evidence type="ECO:0000305" key="2"/>
<accession>P26490</accession>
<comment type="function">
    <text evidence="1">RuBisCO catalyzes two reactions: the carboxylation of D-ribulose 1,5-bisphosphate, the primary event in carbon dioxide fixation, as well as the oxidative fragmentation of the pentose substrate in the photorespiration process. Both reactions occur simultaneously and in competition at the same active site (By similarity).</text>
</comment>
<comment type="catalytic activity">
    <reaction>
        <text>2 (2R)-3-phosphoglycerate + 2 H(+) = D-ribulose 1,5-bisphosphate + CO2 + H2O</text>
        <dbReference type="Rhea" id="RHEA:23124"/>
        <dbReference type="ChEBI" id="CHEBI:15377"/>
        <dbReference type="ChEBI" id="CHEBI:15378"/>
        <dbReference type="ChEBI" id="CHEBI:16526"/>
        <dbReference type="ChEBI" id="CHEBI:57870"/>
        <dbReference type="ChEBI" id="CHEBI:58272"/>
        <dbReference type="EC" id="4.1.1.39"/>
    </reaction>
</comment>
<comment type="catalytic activity">
    <reaction>
        <text>D-ribulose 1,5-bisphosphate + O2 = 2-phosphoglycolate + (2R)-3-phosphoglycerate + 2 H(+)</text>
        <dbReference type="Rhea" id="RHEA:36631"/>
        <dbReference type="ChEBI" id="CHEBI:15378"/>
        <dbReference type="ChEBI" id="CHEBI:15379"/>
        <dbReference type="ChEBI" id="CHEBI:57870"/>
        <dbReference type="ChEBI" id="CHEBI:58033"/>
        <dbReference type="ChEBI" id="CHEBI:58272"/>
    </reaction>
</comment>
<comment type="cofactor">
    <cofactor evidence="1">
        <name>Mg(2+)</name>
        <dbReference type="ChEBI" id="CHEBI:18420"/>
    </cofactor>
    <text evidence="1">Binds 1 Mg(2+) ion per subunit.</text>
</comment>
<comment type="subunit">
    <text evidence="1">Heterohexadecamer of 8 large chains and 8 small chains; disulfide-linked. The disulfide link is formed within the large subunit homodimers (By similarity).</text>
</comment>
<comment type="subcellular location">
    <subcellularLocation>
        <location>Plastid</location>
    </subcellularLocation>
</comment>
<comment type="PTM">
    <text evidence="1">The disulfide bond which can form in the large chain dimeric partners within the hexadecamer appears to be associated with oxidative stress and protein turnover.</text>
</comment>
<comment type="miscellaneous">
    <text evidence="1">The basic functional RuBisCO is composed of a large chain homodimer in a 'head-to-tail' conformation. In form I RuBisCO this homodimer is arranged in a barrel-like tetramer with the small subunits forming a tetrameric 'cap' on each end of the 'barrel' (By similarity).</text>
</comment>
<comment type="similarity">
    <text evidence="2">Belongs to the RuBisCO large chain family. Type I subfamily.</text>
</comment>
<comment type="caution">
    <text evidence="2">This organism being non-photosynthetic, the role of this protein is uncertain.</text>
</comment>
<organism>
    <name type="scientific">Euglena longa</name>
    <name type="common">Euglenophycean alga</name>
    <name type="synonym">Astasia longa</name>
    <dbReference type="NCBI Taxonomy" id="3037"/>
    <lineage>
        <taxon>Eukaryota</taxon>
        <taxon>Discoba</taxon>
        <taxon>Euglenozoa</taxon>
        <taxon>Euglenida</taxon>
        <taxon>Spirocuta</taxon>
        <taxon>Euglenophyceae</taxon>
        <taxon>Euglenales</taxon>
        <taxon>Euglenaceae</taxon>
        <taxon>Euglena</taxon>
    </lineage>
</organism>
<protein>
    <recommendedName>
        <fullName>Ribulose bisphosphate carboxylase large chain</fullName>
        <shortName>RuBisCO large subunit</shortName>
        <ecNumber>4.1.1.39</ecNumber>
    </recommendedName>
</protein>
<feature type="chain" id="PRO_0000062366" description="Ribulose bisphosphate carboxylase large chain">
    <location>
        <begin position="1"/>
        <end position="475"/>
    </location>
</feature>
<feature type="active site" description="Proton acceptor" evidence="1">
    <location>
        <position position="175"/>
    </location>
</feature>
<feature type="active site" description="Proton acceptor" evidence="1">
    <location>
        <position position="294"/>
    </location>
</feature>
<feature type="binding site" description="in homodimeric partner" evidence="1">
    <location>
        <position position="123"/>
    </location>
    <ligand>
        <name>substrate</name>
    </ligand>
</feature>
<feature type="binding site" evidence="1">
    <location>
        <position position="173"/>
    </location>
    <ligand>
        <name>substrate</name>
    </ligand>
</feature>
<feature type="binding site" evidence="1">
    <location>
        <position position="177"/>
    </location>
    <ligand>
        <name>substrate</name>
    </ligand>
</feature>
<feature type="binding site" description="via carbamate group" evidence="1">
    <location>
        <position position="201"/>
    </location>
    <ligand>
        <name>Mg(2+)</name>
        <dbReference type="ChEBI" id="CHEBI:18420"/>
    </ligand>
</feature>
<feature type="binding site" evidence="1">
    <location>
        <position position="203"/>
    </location>
    <ligand>
        <name>Mg(2+)</name>
        <dbReference type="ChEBI" id="CHEBI:18420"/>
    </ligand>
</feature>
<feature type="binding site" evidence="1">
    <location>
        <position position="204"/>
    </location>
    <ligand>
        <name>Mg(2+)</name>
        <dbReference type="ChEBI" id="CHEBI:18420"/>
    </ligand>
</feature>
<feature type="binding site" evidence="1">
    <location>
        <position position="295"/>
    </location>
    <ligand>
        <name>substrate</name>
    </ligand>
</feature>
<feature type="binding site" evidence="1">
    <location>
        <position position="327"/>
    </location>
    <ligand>
        <name>substrate</name>
    </ligand>
</feature>
<feature type="binding site" evidence="1">
    <location>
        <position position="379"/>
    </location>
    <ligand>
        <name>substrate</name>
    </ligand>
</feature>
<feature type="site" description="Transition state stabilizer" evidence="1">
    <location>
        <position position="334"/>
    </location>
</feature>
<feature type="modified residue" description="N6,N6,N6-trimethyllysine" evidence="1">
    <location>
        <position position="14"/>
    </location>
</feature>
<feature type="modified residue" description="N6-carboxylysine" evidence="1">
    <location>
        <position position="201"/>
    </location>
</feature>
<feature type="disulfide bond" description="Interchain; in linked form" evidence="1">
    <location>
        <position position="247"/>
    </location>
</feature>
<reference key="1">
    <citation type="journal article" date="1990" name="Plant Mol. Biol.">
        <title>Structure and expression of a gene encoding the large subunit of ribulose-1,5-bisphosphate carboxylase (rbcL) in the colourless euglenoid flagellate Astasia longa.</title>
        <authorList>
            <person name="Siemeister G."/>
            <person name="Hachtel W."/>
        </authorList>
    </citation>
    <scope>NUCLEOTIDE SEQUENCE [GENOMIC DNA]</scope>
    <scope>DETECTION OF PROTEIN</scope>
    <source>
        <strain>CCAP 1204-17a</strain>
    </source>
</reference>
<reference key="2">
    <citation type="journal article" date="2000" name="Protist">
        <title>Complete gene map of the plastid genome of the nonphotosynthetic euglenoid flagellate Astasia longa.</title>
        <authorList>
            <person name="Gockel G."/>
            <person name="Hachtel W."/>
        </authorList>
    </citation>
    <scope>NUCLEOTIDE SEQUENCE [LARGE SCALE GENOMIC DNA]</scope>
    <source>
        <strain>CCAP 1204-17a</strain>
    </source>
</reference>
<gene>
    <name type="primary">rbcL</name>
</gene>
<geneLocation type="non-photosynthetic plastid"/>
<sequence length="475" mass="52825">MPAQTESKTTTEFKAGVKDYKITYYTPDYKVSDTDVLAAFRMTPQTGVTPEECGAAVAAESSTGTWTTVWTDGLTQLDRYKGRCYDIEPVYGECDQYIAYIAYPIELFEEGSVTNLLTSIVGNVFGFKALRALRLEDLRIPACYLKSFWGPPHGIEVERDKLCKYGRGLLGCTIKPKLGLSAKNYGRAVYECLRGGLDFTKDDENVTSQAFMRWRDRFLFCAEAIYKAQKESGEVKGHYLNVTAGNCEEMYKRADYAVKLGVPIIMHDFLTGGFTANTSLSNYCRNNGLLLHIHRAMHAVIDRQRNHGIHFRVLAKTLRMSGGDHLHSGTVVGKLEGDRAGTYGFINLMRQNLIYRDRACGVYFAQDWCGLASLMPVASGGIHVWHMPALLDIFGDDTCFQFGGGTLGHPWGNASGAVANRVALEACTQARNEGKSLVKYGADIIREACKYSRELAAACDVWKEVTFNFDTVDKL</sequence>